<reference key="1">
    <citation type="journal article" date="2004" name="J. Bacteriol.">
        <title>Complete genome sequence of Rickettsia typhi and comparison with sequences of other Rickettsiae.</title>
        <authorList>
            <person name="McLeod M.P."/>
            <person name="Qin X."/>
            <person name="Karpathy S.E."/>
            <person name="Gioia J."/>
            <person name="Highlander S.K."/>
            <person name="Fox G.E."/>
            <person name="McNeill T.Z."/>
            <person name="Jiang H."/>
            <person name="Muzny D."/>
            <person name="Jacob L.S."/>
            <person name="Hawes A.C."/>
            <person name="Sodergren E."/>
            <person name="Gill R."/>
            <person name="Hume J."/>
            <person name="Morgan M."/>
            <person name="Fan G."/>
            <person name="Amin A.G."/>
            <person name="Gibbs R.A."/>
            <person name="Hong C."/>
            <person name="Yu X.-J."/>
            <person name="Walker D.H."/>
            <person name="Weinstock G.M."/>
        </authorList>
    </citation>
    <scope>NUCLEOTIDE SEQUENCE [LARGE SCALE GENOMIC DNA]</scope>
    <source>
        <strain>ATCC VR-144 / Wilmington</strain>
    </source>
</reference>
<name>XERC_RICTY</name>
<protein>
    <recommendedName>
        <fullName evidence="1">Tyrosine recombinase XerC</fullName>
    </recommendedName>
</protein>
<sequence length="305" mass="35490">MLDISIQELIKQWQKYLILQRNYSNNTVIAYNNDLKHFLEFMNYYNSELVTINHIKTVDIRLIRSWLAKRKYENFTASSIARGLSTVKNFYKFLEKTILLNSHIIFSIKSPKKAKLLPKALSVDDVLISLEHIEGYGNVKWVELRNKALLVLIYAAGLRISEALSITKLHLQNLEFIKIIGKGSKERIIPWLPFARNLITKYLGILPYKLDENEPIFRGKHGKKLQPSVFNRELIKLKRVYGLPEYLTAHSFRHSFASHLLEYGADLRSIQELLGHKSLSTTQKYTQTSIKHLEAVYNTAYPIKK</sequence>
<feature type="chain" id="PRO_0000272367" description="Tyrosine recombinase XerC">
    <location>
        <begin position="1"/>
        <end position="305"/>
    </location>
</feature>
<feature type="domain" description="Core-binding (CB)" evidence="3">
    <location>
        <begin position="4"/>
        <end position="95"/>
    </location>
</feature>
<feature type="domain" description="Tyr recombinase" evidence="2">
    <location>
        <begin position="116"/>
        <end position="298"/>
    </location>
</feature>
<feature type="active site" evidence="1">
    <location>
        <position position="159"/>
    </location>
</feature>
<feature type="active site" evidence="1">
    <location>
        <position position="182"/>
    </location>
</feature>
<feature type="active site" evidence="1">
    <location>
        <position position="250"/>
    </location>
</feature>
<feature type="active site" evidence="1">
    <location>
        <position position="253"/>
    </location>
</feature>
<feature type="active site" evidence="1">
    <location>
        <position position="276"/>
    </location>
</feature>
<feature type="active site" description="O-(3'-phospho-DNA)-tyrosine intermediate" evidence="1">
    <location>
        <position position="285"/>
    </location>
</feature>
<gene>
    <name evidence="1" type="primary">xerC</name>
    <name type="ordered locus">RT0805</name>
</gene>
<keyword id="KW-0131">Cell cycle</keyword>
<keyword id="KW-0132">Cell division</keyword>
<keyword id="KW-0159">Chromosome partition</keyword>
<keyword id="KW-0963">Cytoplasm</keyword>
<keyword id="KW-0229">DNA integration</keyword>
<keyword id="KW-0233">DNA recombination</keyword>
<keyword id="KW-0238">DNA-binding</keyword>
<dbReference type="EMBL" id="AE017197">
    <property type="protein sequence ID" value="AAU04260.1"/>
    <property type="molecule type" value="Genomic_DNA"/>
</dbReference>
<dbReference type="RefSeq" id="WP_011191234.1">
    <property type="nucleotide sequence ID" value="NC_006142.1"/>
</dbReference>
<dbReference type="SMR" id="Q68VT2"/>
<dbReference type="KEGG" id="rty:RT0805"/>
<dbReference type="eggNOG" id="COG4974">
    <property type="taxonomic scope" value="Bacteria"/>
</dbReference>
<dbReference type="HOGENOM" id="CLU_027562_9_0_5"/>
<dbReference type="OrthoDB" id="9801717at2"/>
<dbReference type="Proteomes" id="UP000000604">
    <property type="component" value="Chromosome"/>
</dbReference>
<dbReference type="GO" id="GO:0005737">
    <property type="term" value="C:cytoplasm"/>
    <property type="evidence" value="ECO:0007669"/>
    <property type="project" value="UniProtKB-SubCell"/>
</dbReference>
<dbReference type="GO" id="GO:0003677">
    <property type="term" value="F:DNA binding"/>
    <property type="evidence" value="ECO:0007669"/>
    <property type="project" value="UniProtKB-KW"/>
</dbReference>
<dbReference type="GO" id="GO:0009037">
    <property type="term" value="F:tyrosine-based site-specific recombinase activity"/>
    <property type="evidence" value="ECO:0007669"/>
    <property type="project" value="UniProtKB-UniRule"/>
</dbReference>
<dbReference type="GO" id="GO:0051301">
    <property type="term" value="P:cell division"/>
    <property type="evidence" value="ECO:0007669"/>
    <property type="project" value="UniProtKB-KW"/>
</dbReference>
<dbReference type="GO" id="GO:0007059">
    <property type="term" value="P:chromosome segregation"/>
    <property type="evidence" value="ECO:0007669"/>
    <property type="project" value="UniProtKB-UniRule"/>
</dbReference>
<dbReference type="GO" id="GO:0006313">
    <property type="term" value="P:DNA transposition"/>
    <property type="evidence" value="ECO:0007669"/>
    <property type="project" value="UniProtKB-UniRule"/>
</dbReference>
<dbReference type="Gene3D" id="1.10.150.130">
    <property type="match status" value="1"/>
</dbReference>
<dbReference type="Gene3D" id="1.10.443.10">
    <property type="entry name" value="Intergrase catalytic core"/>
    <property type="match status" value="1"/>
</dbReference>
<dbReference type="HAMAP" id="MF_01808">
    <property type="entry name" value="Recomb_XerC_XerD"/>
    <property type="match status" value="1"/>
</dbReference>
<dbReference type="InterPro" id="IPR044068">
    <property type="entry name" value="CB"/>
</dbReference>
<dbReference type="InterPro" id="IPR011010">
    <property type="entry name" value="DNA_brk_join_enz"/>
</dbReference>
<dbReference type="InterPro" id="IPR013762">
    <property type="entry name" value="Integrase-like_cat_sf"/>
</dbReference>
<dbReference type="InterPro" id="IPR002104">
    <property type="entry name" value="Integrase_catalytic"/>
</dbReference>
<dbReference type="InterPro" id="IPR010998">
    <property type="entry name" value="Integrase_recombinase_N"/>
</dbReference>
<dbReference type="InterPro" id="IPR004107">
    <property type="entry name" value="Integrase_SAM-like_N"/>
</dbReference>
<dbReference type="InterPro" id="IPR023009">
    <property type="entry name" value="Tyrosine_recombinase_XerC/XerD"/>
</dbReference>
<dbReference type="InterPro" id="IPR050090">
    <property type="entry name" value="Tyrosine_recombinase_XerCD"/>
</dbReference>
<dbReference type="PANTHER" id="PTHR30349">
    <property type="entry name" value="PHAGE INTEGRASE-RELATED"/>
    <property type="match status" value="1"/>
</dbReference>
<dbReference type="PANTHER" id="PTHR30349:SF90">
    <property type="entry name" value="TYROSINE RECOMBINASE XERD"/>
    <property type="match status" value="1"/>
</dbReference>
<dbReference type="Pfam" id="PF02899">
    <property type="entry name" value="Phage_int_SAM_1"/>
    <property type="match status" value="1"/>
</dbReference>
<dbReference type="Pfam" id="PF00589">
    <property type="entry name" value="Phage_integrase"/>
    <property type="match status" value="1"/>
</dbReference>
<dbReference type="SUPFAM" id="SSF56349">
    <property type="entry name" value="DNA breaking-rejoining enzymes"/>
    <property type="match status" value="1"/>
</dbReference>
<dbReference type="PROSITE" id="PS51900">
    <property type="entry name" value="CB"/>
    <property type="match status" value="1"/>
</dbReference>
<dbReference type="PROSITE" id="PS51898">
    <property type="entry name" value="TYR_RECOMBINASE"/>
    <property type="match status" value="1"/>
</dbReference>
<evidence type="ECO:0000255" key="1">
    <source>
        <dbReference type="HAMAP-Rule" id="MF_01808"/>
    </source>
</evidence>
<evidence type="ECO:0000255" key="2">
    <source>
        <dbReference type="PROSITE-ProRule" id="PRU01246"/>
    </source>
</evidence>
<evidence type="ECO:0000255" key="3">
    <source>
        <dbReference type="PROSITE-ProRule" id="PRU01248"/>
    </source>
</evidence>
<comment type="function">
    <text evidence="1">Site-specific tyrosine recombinase, which acts by catalyzing the cutting and rejoining of the recombining DNA molecules. The XerC-XerD complex is essential to convert dimers of the bacterial chromosome into monomers to permit their segregation at cell division. It also contributes to the segregational stability of plasmids.</text>
</comment>
<comment type="subunit">
    <text evidence="1">Forms a cyclic heterotetrameric complex composed of two molecules of XerC and two molecules of XerD.</text>
</comment>
<comment type="subcellular location">
    <subcellularLocation>
        <location evidence="1">Cytoplasm</location>
    </subcellularLocation>
</comment>
<comment type="similarity">
    <text evidence="1">Belongs to the 'phage' integrase family. XerC subfamily.</text>
</comment>
<accession>Q68VT2</accession>
<organism>
    <name type="scientific">Rickettsia typhi (strain ATCC VR-144 / Wilmington)</name>
    <dbReference type="NCBI Taxonomy" id="257363"/>
    <lineage>
        <taxon>Bacteria</taxon>
        <taxon>Pseudomonadati</taxon>
        <taxon>Pseudomonadota</taxon>
        <taxon>Alphaproteobacteria</taxon>
        <taxon>Rickettsiales</taxon>
        <taxon>Rickettsiaceae</taxon>
        <taxon>Rickettsieae</taxon>
        <taxon>Rickettsia</taxon>
        <taxon>typhus group</taxon>
    </lineage>
</organism>
<proteinExistence type="inferred from homology"/>